<proteinExistence type="inferred from homology"/>
<keyword id="KW-0274">FAD</keyword>
<keyword id="KW-0285">Flavoprotein</keyword>
<keyword id="KW-0521">NADP</keyword>
<keyword id="KW-0560">Oxidoreductase</keyword>
<dbReference type="EC" id="1.18.1.2" evidence="1"/>
<dbReference type="EMBL" id="CP000090">
    <property type="protein sequence ID" value="AAZ61650.1"/>
    <property type="molecule type" value="Genomic_DNA"/>
</dbReference>
<dbReference type="SMR" id="Q46YY3"/>
<dbReference type="STRING" id="264198.Reut_A2287"/>
<dbReference type="KEGG" id="reu:Reut_A2287"/>
<dbReference type="eggNOG" id="COG0492">
    <property type="taxonomic scope" value="Bacteria"/>
</dbReference>
<dbReference type="HOGENOM" id="CLU_031864_5_5_4"/>
<dbReference type="OrthoDB" id="9806179at2"/>
<dbReference type="GO" id="GO:0004324">
    <property type="term" value="F:ferredoxin-NADP+ reductase activity"/>
    <property type="evidence" value="ECO:0007669"/>
    <property type="project" value="UniProtKB-UniRule"/>
</dbReference>
<dbReference type="GO" id="GO:0050660">
    <property type="term" value="F:flavin adenine dinucleotide binding"/>
    <property type="evidence" value="ECO:0007669"/>
    <property type="project" value="UniProtKB-UniRule"/>
</dbReference>
<dbReference type="GO" id="GO:0050661">
    <property type="term" value="F:NADP binding"/>
    <property type="evidence" value="ECO:0007669"/>
    <property type="project" value="UniProtKB-UniRule"/>
</dbReference>
<dbReference type="Gene3D" id="3.50.50.60">
    <property type="entry name" value="FAD/NAD(P)-binding domain"/>
    <property type="match status" value="2"/>
</dbReference>
<dbReference type="HAMAP" id="MF_01685">
    <property type="entry name" value="FENR2"/>
    <property type="match status" value="1"/>
</dbReference>
<dbReference type="InterPro" id="IPR036188">
    <property type="entry name" value="FAD/NAD-bd_sf"/>
</dbReference>
<dbReference type="InterPro" id="IPR023753">
    <property type="entry name" value="FAD/NAD-binding_dom"/>
</dbReference>
<dbReference type="InterPro" id="IPR022890">
    <property type="entry name" value="Fd--NADP_Rdtase_type_2"/>
</dbReference>
<dbReference type="InterPro" id="IPR050097">
    <property type="entry name" value="Ferredoxin-NADP_redctase_2"/>
</dbReference>
<dbReference type="PANTHER" id="PTHR48105">
    <property type="entry name" value="THIOREDOXIN REDUCTASE 1-RELATED-RELATED"/>
    <property type="match status" value="1"/>
</dbReference>
<dbReference type="Pfam" id="PF07992">
    <property type="entry name" value="Pyr_redox_2"/>
    <property type="match status" value="1"/>
</dbReference>
<dbReference type="PRINTS" id="PR00368">
    <property type="entry name" value="FADPNR"/>
</dbReference>
<dbReference type="PRINTS" id="PR00469">
    <property type="entry name" value="PNDRDTASEII"/>
</dbReference>
<dbReference type="SUPFAM" id="SSF51905">
    <property type="entry name" value="FAD/NAD(P)-binding domain"/>
    <property type="match status" value="2"/>
</dbReference>
<name>FENR2_CUPPJ</name>
<evidence type="ECO:0000255" key="1">
    <source>
        <dbReference type="HAMAP-Rule" id="MF_01685"/>
    </source>
</evidence>
<accession>Q46YY3</accession>
<reference key="1">
    <citation type="journal article" date="2010" name="PLoS ONE">
        <title>The complete multipartite genome sequence of Cupriavidus necator JMP134, a versatile pollutant degrader.</title>
        <authorList>
            <person name="Lykidis A."/>
            <person name="Perez-Pantoja D."/>
            <person name="Ledger T."/>
            <person name="Mavromatis K."/>
            <person name="Anderson I.J."/>
            <person name="Ivanova N.N."/>
            <person name="Hooper S.D."/>
            <person name="Lapidus A."/>
            <person name="Lucas S."/>
            <person name="Gonzalez B."/>
            <person name="Kyrpides N.C."/>
        </authorList>
    </citation>
    <scope>NUCLEOTIDE SEQUENCE [LARGE SCALE GENOMIC DNA]</scope>
    <source>
        <strain>JMP134 / LMG 1197</strain>
    </source>
</reference>
<protein>
    <recommendedName>
        <fullName evidence="1">Ferredoxin--NADP reductase 2</fullName>
        <shortName evidence="1">FNR 2</shortName>
        <shortName evidence="1">Fd-NADP(+) reductase 2</shortName>
        <ecNumber evidence="1">1.18.1.2</ecNumber>
    </recommendedName>
</protein>
<gene>
    <name type="ordered locus">Reut_A2287</name>
</gene>
<organism>
    <name type="scientific">Cupriavidus pinatubonensis (strain JMP 134 / LMG 1197)</name>
    <name type="common">Cupriavidus necator (strain JMP 134)</name>
    <dbReference type="NCBI Taxonomy" id="264198"/>
    <lineage>
        <taxon>Bacteria</taxon>
        <taxon>Pseudomonadati</taxon>
        <taxon>Pseudomonadota</taxon>
        <taxon>Betaproteobacteria</taxon>
        <taxon>Burkholderiales</taxon>
        <taxon>Burkholderiaceae</taxon>
        <taxon>Cupriavidus</taxon>
    </lineage>
</organism>
<feature type="chain" id="PRO_0000364906" description="Ferredoxin--NADP reductase 2">
    <location>
        <begin position="1"/>
        <end position="368"/>
    </location>
</feature>
<feature type="binding site" evidence="1">
    <location>
        <position position="57"/>
    </location>
    <ligand>
        <name>FAD</name>
        <dbReference type="ChEBI" id="CHEBI:57692"/>
    </ligand>
</feature>
<feature type="binding site" evidence="1">
    <location>
        <position position="65"/>
    </location>
    <ligand>
        <name>FAD</name>
        <dbReference type="ChEBI" id="CHEBI:57692"/>
    </ligand>
</feature>
<feature type="binding site" evidence="1">
    <location>
        <position position="70"/>
    </location>
    <ligand>
        <name>FAD</name>
        <dbReference type="ChEBI" id="CHEBI:57692"/>
    </ligand>
</feature>
<feature type="binding site" evidence="1">
    <location>
        <position position="110"/>
    </location>
    <ligand>
        <name>FAD</name>
        <dbReference type="ChEBI" id="CHEBI:57692"/>
    </ligand>
</feature>
<feature type="binding site" evidence="1">
    <location>
        <position position="145"/>
    </location>
    <ligand>
        <name>FAD</name>
        <dbReference type="ChEBI" id="CHEBI:57692"/>
    </ligand>
</feature>
<feature type="binding site" evidence="1">
    <location>
        <position position="310"/>
    </location>
    <ligand>
        <name>FAD</name>
        <dbReference type="ChEBI" id="CHEBI:57692"/>
    </ligand>
</feature>
<feature type="binding site" evidence="1">
    <location>
        <position position="351"/>
    </location>
    <ligand>
        <name>FAD</name>
        <dbReference type="ChEBI" id="CHEBI:57692"/>
    </ligand>
</feature>
<comment type="catalytic activity">
    <reaction evidence="1">
        <text>2 reduced [2Fe-2S]-[ferredoxin] + NADP(+) + H(+) = 2 oxidized [2Fe-2S]-[ferredoxin] + NADPH</text>
        <dbReference type="Rhea" id="RHEA:20125"/>
        <dbReference type="Rhea" id="RHEA-COMP:10000"/>
        <dbReference type="Rhea" id="RHEA-COMP:10001"/>
        <dbReference type="ChEBI" id="CHEBI:15378"/>
        <dbReference type="ChEBI" id="CHEBI:33737"/>
        <dbReference type="ChEBI" id="CHEBI:33738"/>
        <dbReference type="ChEBI" id="CHEBI:57783"/>
        <dbReference type="ChEBI" id="CHEBI:58349"/>
        <dbReference type="EC" id="1.18.1.2"/>
    </reaction>
</comment>
<comment type="cofactor">
    <cofactor evidence="1">
        <name>FAD</name>
        <dbReference type="ChEBI" id="CHEBI:57692"/>
    </cofactor>
    <text evidence="1">Binds 1 FAD per subunit.</text>
</comment>
<comment type="subunit">
    <text evidence="1">Homodimer.</text>
</comment>
<comment type="similarity">
    <text evidence="1">Belongs to the ferredoxin--NADP reductase type 2 family.</text>
</comment>
<sequence>MDLSIPNPVADTTKAADAGTAGGQPLEIDALIVGAGPVGLFQVFELGLLEIKAHVIDSLKVVGGQCVELYPDKPIYDIPAVPSCTGQELTDNLLKQIEPFGPTFHLGQEVAVVERRDDGRFFVETSLGTRFITKTIFIAAGVGSFQPRTLKVDGIDKFDGKQLFYRVKDPSRFHGRNLVIVGGGDSALDWTLDLVGKAESVVMIHRRDGFRAAPASVAKMKELCEQMEMQFLVGQIGGYEEKDGVLTEIKVTGADGVTRRLPVDDVLVFFGLSPKLGPIAEWGLDLERKQIKVDTEKFQTNIPGIFAVGDINTYPGKKKLILSGFHEAALAAFGAAPYIFPEKKIHMQYTTTSPKLHKVLGVESPVFD</sequence>